<reference key="1">
    <citation type="journal article" date="2006" name="J. Bacteriol.">
        <title>Pathogenomic sequence analysis of Bacillus cereus and Bacillus thuringiensis isolates closely related to Bacillus anthracis.</title>
        <authorList>
            <person name="Han C.S."/>
            <person name="Xie G."/>
            <person name="Challacombe J.F."/>
            <person name="Altherr M.R."/>
            <person name="Bhotika S.S."/>
            <person name="Bruce D."/>
            <person name="Campbell C.S."/>
            <person name="Campbell M.L."/>
            <person name="Chen J."/>
            <person name="Chertkov O."/>
            <person name="Cleland C."/>
            <person name="Dimitrijevic M."/>
            <person name="Doggett N.A."/>
            <person name="Fawcett J.J."/>
            <person name="Glavina T."/>
            <person name="Goodwin L.A."/>
            <person name="Hill K.K."/>
            <person name="Hitchcock P."/>
            <person name="Jackson P.J."/>
            <person name="Keim P."/>
            <person name="Kewalramani A.R."/>
            <person name="Longmire J."/>
            <person name="Lucas S."/>
            <person name="Malfatti S."/>
            <person name="McMurry K."/>
            <person name="Meincke L.J."/>
            <person name="Misra M."/>
            <person name="Moseman B.L."/>
            <person name="Mundt M."/>
            <person name="Munk A.C."/>
            <person name="Okinaka R.T."/>
            <person name="Parson-Quintana B."/>
            <person name="Reilly L.P."/>
            <person name="Richardson P."/>
            <person name="Robinson D.L."/>
            <person name="Rubin E."/>
            <person name="Saunders E."/>
            <person name="Tapia R."/>
            <person name="Tesmer J.G."/>
            <person name="Thayer N."/>
            <person name="Thompson L.S."/>
            <person name="Tice H."/>
            <person name="Ticknor L.O."/>
            <person name="Wills P.L."/>
            <person name="Brettin T.S."/>
            <person name="Gilna P."/>
        </authorList>
    </citation>
    <scope>NUCLEOTIDE SEQUENCE [LARGE SCALE GENOMIC DNA]</scope>
    <source>
        <strain>97-27</strain>
    </source>
</reference>
<accession>Q6HBF0</accession>
<feature type="chain" id="PRO_1000057965" description="Phosphoglycerate kinase">
    <location>
        <begin position="1"/>
        <end position="394"/>
    </location>
</feature>
<feature type="binding site" evidence="1">
    <location>
        <begin position="21"/>
        <end position="23"/>
    </location>
    <ligand>
        <name>substrate</name>
    </ligand>
</feature>
<feature type="binding site" evidence="1">
    <location>
        <position position="36"/>
    </location>
    <ligand>
        <name>substrate</name>
    </ligand>
</feature>
<feature type="binding site" evidence="1">
    <location>
        <begin position="59"/>
        <end position="62"/>
    </location>
    <ligand>
        <name>substrate</name>
    </ligand>
</feature>
<feature type="binding site" evidence="1">
    <location>
        <position position="118"/>
    </location>
    <ligand>
        <name>substrate</name>
    </ligand>
</feature>
<feature type="binding site" evidence="1">
    <location>
        <position position="151"/>
    </location>
    <ligand>
        <name>substrate</name>
    </ligand>
</feature>
<feature type="binding site" evidence="1">
    <location>
        <position position="201"/>
    </location>
    <ligand>
        <name>ATP</name>
        <dbReference type="ChEBI" id="CHEBI:30616"/>
    </ligand>
</feature>
<feature type="binding site" evidence="1">
    <location>
        <position position="292"/>
    </location>
    <ligand>
        <name>ATP</name>
        <dbReference type="ChEBI" id="CHEBI:30616"/>
    </ligand>
</feature>
<feature type="binding site" evidence="1">
    <location>
        <position position="323"/>
    </location>
    <ligand>
        <name>ATP</name>
        <dbReference type="ChEBI" id="CHEBI:30616"/>
    </ligand>
</feature>
<feature type="binding site" evidence="1">
    <location>
        <begin position="350"/>
        <end position="353"/>
    </location>
    <ligand>
        <name>ATP</name>
        <dbReference type="ChEBI" id="CHEBI:30616"/>
    </ligand>
</feature>
<feature type="modified residue" description="Phosphoserine" evidence="1">
    <location>
        <position position="183"/>
    </location>
</feature>
<feature type="modified residue" description="Phosphothreonine" evidence="1">
    <location>
        <position position="299"/>
    </location>
</feature>
<comment type="catalytic activity">
    <reaction evidence="1">
        <text>(2R)-3-phosphoglycerate + ATP = (2R)-3-phospho-glyceroyl phosphate + ADP</text>
        <dbReference type="Rhea" id="RHEA:14801"/>
        <dbReference type="ChEBI" id="CHEBI:30616"/>
        <dbReference type="ChEBI" id="CHEBI:57604"/>
        <dbReference type="ChEBI" id="CHEBI:58272"/>
        <dbReference type="ChEBI" id="CHEBI:456216"/>
        <dbReference type="EC" id="2.7.2.3"/>
    </reaction>
</comment>
<comment type="pathway">
    <text evidence="1">Carbohydrate degradation; glycolysis; pyruvate from D-glyceraldehyde 3-phosphate: step 2/5.</text>
</comment>
<comment type="subunit">
    <text evidence="1">Monomer.</text>
</comment>
<comment type="subcellular location">
    <subcellularLocation>
        <location evidence="1">Cytoplasm</location>
    </subcellularLocation>
</comment>
<comment type="similarity">
    <text evidence="1">Belongs to the phosphoglycerate kinase family.</text>
</comment>
<proteinExistence type="inferred from homology"/>
<gene>
    <name evidence="1" type="primary">pgk</name>
    <name type="ordered locus">BT9727_4817</name>
</gene>
<dbReference type="EC" id="2.7.2.3" evidence="1"/>
<dbReference type="EMBL" id="AE017355">
    <property type="protein sequence ID" value="AAT61096.1"/>
    <property type="molecule type" value="Genomic_DNA"/>
</dbReference>
<dbReference type="RefSeq" id="WP_001036339.1">
    <property type="nucleotide sequence ID" value="NC_005957.1"/>
</dbReference>
<dbReference type="RefSeq" id="YP_039126.1">
    <property type="nucleotide sequence ID" value="NC_005957.1"/>
</dbReference>
<dbReference type="KEGG" id="btk:BT9727_4817"/>
<dbReference type="PATRIC" id="fig|281309.8.peg.5123"/>
<dbReference type="HOGENOM" id="CLU_025427_0_2_9"/>
<dbReference type="UniPathway" id="UPA00109">
    <property type="reaction ID" value="UER00185"/>
</dbReference>
<dbReference type="Proteomes" id="UP000001301">
    <property type="component" value="Chromosome"/>
</dbReference>
<dbReference type="GO" id="GO:0005829">
    <property type="term" value="C:cytosol"/>
    <property type="evidence" value="ECO:0007669"/>
    <property type="project" value="TreeGrafter"/>
</dbReference>
<dbReference type="GO" id="GO:0043531">
    <property type="term" value="F:ADP binding"/>
    <property type="evidence" value="ECO:0007669"/>
    <property type="project" value="TreeGrafter"/>
</dbReference>
<dbReference type="GO" id="GO:0005524">
    <property type="term" value="F:ATP binding"/>
    <property type="evidence" value="ECO:0007669"/>
    <property type="project" value="UniProtKB-KW"/>
</dbReference>
<dbReference type="GO" id="GO:0004618">
    <property type="term" value="F:phosphoglycerate kinase activity"/>
    <property type="evidence" value="ECO:0007669"/>
    <property type="project" value="UniProtKB-UniRule"/>
</dbReference>
<dbReference type="GO" id="GO:0006094">
    <property type="term" value="P:gluconeogenesis"/>
    <property type="evidence" value="ECO:0007669"/>
    <property type="project" value="TreeGrafter"/>
</dbReference>
<dbReference type="GO" id="GO:0006096">
    <property type="term" value="P:glycolytic process"/>
    <property type="evidence" value="ECO:0007669"/>
    <property type="project" value="UniProtKB-UniRule"/>
</dbReference>
<dbReference type="CDD" id="cd00318">
    <property type="entry name" value="Phosphoglycerate_kinase"/>
    <property type="match status" value="1"/>
</dbReference>
<dbReference type="FunFam" id="3.40.50.1260:FF:000001">
    <property type="entry name" value="Phosphoglycerate kinase"/>
    <property type="match status" value="1"/>
</dbReference>
<dbReference type="FunFam" id="3.40.50.1260:FF:000002">
    <property type="entry name" value="Phosphoglycerate kinase"/>
    <property type="match status" value="1"/>
</dbReference>
<dbReference type="Gene3D" id="3.40.50.1260">
    <property type="entry name" value="Phosphoglycerate kinase, N-terminal domain"/>
    <property type="match status" value="2"/>
</dbReference>
<dbReference type="HAMAP" id="MF_00145">
    <property type="entry name" value="Phosphoglyc_kinase"/>
    <property type="match status" value="1"/>
</dbReference>
<dbReference type="InterPro" id="IPR001576">
    <property type="entry name" value="Phosphoglycerate_kinase"/>
</dbReference>
<dbReference type="InterPro" id="IPR015911">
    <property type="entry name" value="Phosphoglycerate_kinase_CS"/>
</dbReference>
<dbReference type="InterPro" id="IPR015824">
    <property type="entry name" value="Phosphoglycerate_kinase_N"/>
</dbReference>
<dbReference type="InterPro" id="IPR036043">
    <property type="entry name" value="Phosphoglycerate_kinase_sf"/>
</dbReference>
<dbReference type="PANTHER" id="PTHR11406">
    <property type="entry name" value="PHOSPHOGLYCERATE KINASE"/>
    <property type="match status" value="1"/>
</dbReference>
<dbReference type="PANTHER" id="PTHR11406:SF23">
    <property type="entry name" value="PHOSPHOGLYCERATE KINASE 1, CHLOROPLASTIC-RELATED"/>
    <property type="match status" value="1"/>
</dbReference>
<dbReference type="Pfam" id="PF00162">
    <property type="entry name" value="PGK"/>
    <property type="match status" value="1"/>
</dbReference>
<dbReference type="PIRSF" id="PIRSF000724">
    <property type="entry name" value="Pgk"/>
    <property type="match status" value="1"/>
</dbReference>
<dbReference type="PRINTS" id="PR00477">
    <property type="entry name" value="PHGLYCKINASE"/>
</dbReference>
<dbReference type="SUPFAM" id="SSF53748">
    <property type="entry name" value="Phosphoglycerate kinase"/>
    <property type="match status" value="1"/>
</dbReference>
<dbReference type="PROSITE" id="PS00111">
    <property type="entry name" value="PGLYCERATE_KINASE"/>
    <property type="match status" value="1"/>
</dbReference>
<protein>
    <recommendedName>
        <fullName evidence="1">Phosphoglycerate kinase</fullName>
        <ecNumber evidence="1">2.7.2.3</ecNumber>
    </recommendedName>
</protein>
<sequence length="394" mass="42299">MNKKSIRDVDLKGKRVFCRVDFNVPMKEGKITDETRIRAALPTIQYLVEQGAKVILASHLGRPKGQAVEELRLTPVAARLGELLGKDVKKADEAFGPVAQEMVAAMNEGDVLVLENVRFYAGEEKNDAELAKEFAALADIFVNDAFGAAHRAHASTAGIADYLPAVSGLLMEKELEVLGKALSNPERPFTAIIGGAKVKDKIGVIRHLLDKVDNLIIGGGLAYTFVKALGHEIGLSLCEDDKIELAKEFMQLAKEKGVNFYMPVDVVITEEFSETATTKIVGIDSIPSNWEGVDIGPKTREIYADVIKNSKLVVWNGPMGVFEMTPFSQGTKAVGQALADAEGTYSVIGGGDSAAAVEKFGMADKMSHISTGGGASLEFMEGKELPGVVCLNDK</sequence>
<keyword id="KW-0067">ATP-binding</keyword>
<keyword id="KW-0963">Cytoplasm</keyword>
<keyword id="KW-0324">Glycolysis</keyword>
<keyword id="KW-0418">Kinase</keyword>
<keyword id="KW-0547">Nucleotide-binding</keyword>
<keyword id="KW-0597">Phosphoprotein</keyword>
<keyword id="KW-0808">Transferase</keyword>
<name>PGK_BACHK</name>
<evidence type="ECO:0000255" key="1">
    <source>
        <dbReference type="HAMAP-Rule" id="MF_00145"/>
    </source>
</evidence>
<organism>
    <name type="scientific">Bacillus thuringiensis subsp. konkukian (strain 97-27)</name>
    <dbReference type="NCBI Taxonomy" id="281309"/>
    <lineage>
        <taxon>Bacteria</taxon>
        <taxon>Bacillati</taxon>
        <taxon>Bacillota</taxon>
        <taxon>Bacilli</taxon>
        <taxon>Bacillales</taxon>
        <taxon>Bacillaceae</taxon>
        <taxon>Bacillus</taxon>
        <taxon>Bacillus cereus group</taxon>
    </lineage>
</organism>